<proteinExistence type="inferred from homology"/>
<keyword id="KW-0067">ATP-binding</keyword>
<keyword id="KW-0143">Chaperone</keyword>
<keyword id="KW-0479">Metal-binding</keyword>
<keyword id="KW-0547">Nucleotide-binding</keyword>
<keyword id="KW-0862">Zinc</keyword>
<gene>
    <name evidence="1" type="primary">clpX</name>
    <name type="ordered locus">COXBURSA331_A1212</name>
</gene>
<organism>
    <name type="scientific">Coxiella burnetii (strain RSA 331 / Henzerling II)</name>
    <dbReference type="NCBI Taxonomy" id="360115"/>
    <lineage>
        <taxon>Bacteria</taxon>
        <taxon>Pseudomonadati</taxon>
        <taxon>Pseudomonadota</taxon>
        <taxon>Gammaproteobacteria</taxon>
        <taxon>Legionellales</taxon>
        <taxon>Coxiellaceae</taxon>
        <taxon>Coxiella</taxon>
    </lineage>
</organism>
<reference key="1">
    <citation type="submission" date="2007-11" db="EMBL/GenBank/DDBJ databases">
        <title>Genome sequencing of phylogenetically and phenotypically diverse Coxiella burnetii isolates.</title>
        <authorList>
            <person name="Seshadri R."/>
            <person name="Samuel J.E."/>
        </authorList>
    </citation>
    <scope>NUCLEOTIDE SEQUENCE [LARGE SCALE GENOMIC DNA]</scope>
    <source>
        <strain>RSA 331 / Henzerling II</strain>
    </source>
</reference>
<dbReference type="EMBL" id="CP000890">
    <property type="protein sequence ID" value="ABX78350.1"/>
    <property type="molecule type" value="Genomic_DNA"/>
</dbReference>
<dbReference type="RefSeq" id="WP_012220494.1">
    <property type="nucleotide sequence ID" value="NC_010117.1"/>
</dbReference>
<dbReference type="SMR" id="A9NDF9"/>
<dbReference type="KEGG" id="cbs:COXBURSA331_A1212"/>
<dbReference type="HOGENOM" id="CLU_014218_8_2_6"/>
<dbReference type="GO" id="GO:0009376">
    <property type="term" value="C:HslUV protease complex"/>
    <property type="evidence" value="ECO:0007669"/>
    <property type="project" value="TreeGrafter"/>
</dbReference>
<dbReference type="GO" id="GO:0005524">
    <property type="term" value="F:ATP binding"/>
    <property type="evidence" value="ECO:0007669"/>
    <property type="project" value="UniProtKB-UniRule"/>
</dbReference>
<dbReference type="GO" id="GO:0016887">
    <property type="term" value="F:ATP hydrolysis activity"/>
    <property type="evidence" value="ECO:0007669"/>
    <property type="project" value="InterPro"/>
</dbReference>
<dbReference type="GO" id="GO:0140662">
    <property type="term" value="F:ATP-dependent protein folding chaperone"/>
    <property type="evidence" value="ECO:0007669"/>
    <property type="project" value="InterPro"/>
</dbReference>
<dbReference type="GO" id="GO:0046983">
    <property type="term" value="F:protein dimerization activity"/>
    <property type="evidence" value="ECO:0007669"/>
    <property type="project" value="InterPro"/>
</dbReference>
<dbReference type="GO" id="GO:0051082">
    <property type="term" value="F:unfolded protein binding"/>
    <property type="evidence" value="ECO:0007669"/>
    <property type="project" value="UniProtKB-UniRule"/>
</dbReference>
<dbReference type="GO" id="GO:0008270">
    <property type="term" value="F:zinc ion binding"/>
    <property type="evidence" value="ECO:0007669"/>
    <property type="project" value="InterPro"/>
</dbReference>
<dbReference type="GO" id="GO:0051301">
    <property type="term" value="P:cell division"/>
    <property type="evidence" value="ECO:0007669"/>
    <property type="project" value="TreeGrafter"/>
</dbReference>
<dbReference type="GO" id="GO:0051603">
    <property type="term" value="P:proteolysis involved in protein catabolic process"/>
    <property type="evidence" value="ECO:0007669"/>
    <property type="project" value="TreeGrafter"/>
</dbReference>
<dbReference type="CDD" id="cd19497">
    <property type="entry name" value="RecA-like_ClpX"/>
    <property type="match status" value="1"/>
</dbReference>
<dbReference type="FunFam" id="1.10.8.60:FF:000002">
    <property type="entry name" value="ATP-dependent Clp protease ATP-binding subunit ClpX"/>
    <property type="match status" value="1"/>
</dbReference>
<dbReference type="FunFam" id="3.40.50.300:FF:000005">
    <property type="entry name" value="ATP-dependent Clp protease ATP-binding subunit ClpX"/>
    <property type="match status" value="1"/>
</dbReference>
<dbReference type="Gene3D" id="1.10.8.60">
    <property type="match status" value="1"/>
</dbReference>
<dbReference type="Gene3D" id="6.20.220.10">
    <property type="entry name" value="ClpX chaperone, C4-type zinc finger domain"/>
    <property type="match status" value="1"/>
</dbReference>
<dbReference type="Gene3D" id="3.40.50.300">
    <property type="entry name" value="P-loop containing nucleotide triphosphate hydrolases"/>
    <property type="match status" value="1"/>
</dbReference>
<dbReference type="HAMAP" id="MF_00175">
    <property type="entry name" value="ClpX"/>
    <property type="match status" value="1"/>
</dbReference>
<dbReference type="InterPro" id="IPR003593">
    <property type="entry name" value="AAA+_ATPase"/>
</dbReference>
<dbReference type="InterPro" id="IPR050052">
    <property type="entry name" value="ATP-dep_Clp_protease_ClpX"/>
</dbReference>
<dbReference type="InterPro" id="IPR003959">
    <property type="entry name" value="ATPase_AAA_core"/>
</dbReference>
<dbReference type="InterPro" id="IPR019489">
    <property type="entry name" value="Clp_ATPase_C"/>
</dbReference>
<dbReference type="InterPro" id="IPR004487">
    <property type="entry name" value="Clp_protease_ATP-bd_su_ClpX"/>
</dbReference>
<dbReference type="InterPro" id="IPR046425">
    <property type="entry name" value="ClpX_bact"/>
</dbReference>
<dbReference type="InterPro" id="IPR027417">
    <property type="entry name" value="P-loop_NTPase"/>
</dbReference>
<dbReference type="InterPro" id="IPR010603">
    <property type="entry name" value="Znf_CppX_C4"/>
</dbReference>
<dbReference type="InterPro" id="IPR038366">
    <property type="entry name" value="Znf_CppX_C4_sf"/>
</dbReference>
<dbReference type="NCBIfam" id="TIGR00382">
    <property type="entry name" value="clpX"/>
    <property type="match status" value="1"/>
</dbReference>
<dbReference type="NCBIfam" id="NF003745">
    <property type="entry name" value="PRK05342.1"/>
    <property type="match status" value="1"/>
</dbReference>
<dbReference type="PANTHER" id="PTHR48102:SF7">
    <property type="entry name" value="ATP-DEPENDENT CLP PROTEASE ATP-BINDING SUBUNIT CLPX-LIKE, MITOCHONDRIAL"/>
    <property type="match status" value="1"/>
</dbReference>
<dbReference type="PANTHER" id="PTHR48102">
    <property type="entry name" value="ATP-DEPENDENT CLP PROTEASE ATP-BINDING SUBUNIT CLPX-LIKE, MITOCHONDRIAL-RELATED"/>
    <property type="match status" value="1"/>
</dbReference>
<dbReference type="Pfam" id="PF07724">
    <property type="entry name" value="AAA_2"/>
    <property type="match status" value="1"/>
</dbReference>
<dbReference type="Pfam" id="PF10431">
    <property type="entry name" value="ClpB_D2-small"/>
    <property type="match status" value="1"/>
</dbReference>
<dbReference type="Pfam" id="PF06689">
    <property type="entry name" value="zf-C4_ClpX"/>
    <property type="match status" value="1"/>
</dbReference>
<dbReference type="SMART" id="SM00382">
    <property type="entry name" value="AAA"/>
    <property type="match status" value="1"/>
</dbReference>
<dbReference type="SMART" id="SM01086">
    <property type="entry name" value="ClpB_D2-small"/>
    <property type="match status" value="1"/>
</dbReference>
<dbReference type="SMART" id="SM00994">
    <property type="entry name" value="zf-C4_ClpX"/>
    <property type="match status" value="1"/>
</dbReference>
<dbReference type="SUPFAM" id="SSF57716">
    <property type="entry name" value="Glucocorticoid receptor-like (DNA-binding domain)"/>
    <property type="match status" value="1"/>
</dbReference>
<dbReference type="SUPFAM" id="SSF52540">
    <property type="entry name" value="P-loop containing nucleoside triphosphate hydrolases"/>
    <property type="match status" value="1"/>
</dbReference>
<dbReference type="PROSITE" id="PS51902">
    <property type="entry name" value="CLPX_ZB"/>
    <property type="match status" value="1"/>
</dbReference>
<comment type="function">
    <text evidence="1">ATP-dependent specificity component of the Clp protease. It directs the protease to specific substrates. Can perform chaperone functions in the absence of ClpP.</text>
</comment>
<comment type="subunit">
    <text evidence="1">Component of the ClpX-ClpP complex. Forms a hexameric ring that, in the presence of ATP, binds to fourteen ClpP subunits assembled into a disk-like structure with a central cavity, resembling the structure of eukaryotic proteasomes.</text>
</comment>
<comment type="similarity">
    <text evidence="1">Belongs to the ClpX chaperone family.</text>
</comment>
<accession>A9NDF9</accession>
<protein>
    <recommendedName>
        <fullName evidence="1">ATP-dependent Clp protease ATP-binding subunit ClpX</fullName>
    </recommendedName>
</protein>
<evidence type="ECO:0000255" key="1">
    <source>
        <dbReference type="HAMAP-Rule" id="MF_00175"/>
    </source>
</evidence>
<evidence type="ECO:0000255" key="2">
    <source>
        <dbReference type="PROSITE-ProRule" id="PRU01250"/>
    </source>
</evidence>
<sequence>MSSDEKLQILYCSFCGKSQHQVRKLIAGPAVFVCNECVDLCNDIIREEEIAQAGGAQKKLPTPPEIHRMLDEYVIGQEFAKKVLSVAVYNHYKRLGNQTKKDSVEISKSNILLIGPTGSGKTLLAQTLAKILDVPFAIADATTLTEAGYVGEDVENIIQKLLQKCNYDVEKAKTGIIYIDEIDKIARKTDSPSLTRDVSGEGVQQALLKLIEGTVASIPPQGGRKHPQQEYLQVDTSNILFICGGAFADLHKIIQRRTDKSGIGFAAEVRPKEDFSREASKLIKQTEPGDLIKYGLIPEFVGRLPIITTLEELDEDALMRILTEPKNALVKQYRKLFEFEGVEIDFREDALNAIAKRAIQQKTGARGLRSIVEHTLLDLMYDLPGVAAGLRKVVIDSGVIDQASPPIFIYHHEKASRKVAQE</sequence>
<name>CLPX_COXBR</name>
<feature type="chain" id="PRO_1000077155" description="ATP-dependent Clp protease ATP-binding subunit ClpX">
    <location>
        <begin position="1"/>
        <end position="422"/>
    </location>
</feature>
<feature type="domain" description="ClpX-type ZB" evidence="2">
    <location>
        <begin position="1"/>
        <end position="53"/>
    </location>
</feature>
<feature type="binding site" evidence="2">
    <location>
        <position position="12"/>
    </location>
    <ligand>
        <name>Zn(2+)</name>
        <dbReference type="ChEBI" id="CHEBI:29105"/>
    </ligand>
</feature>
<feature type="binding site" evidence="2">
    <location>
        <position position="15"/>
    </location>
    <ligand>
        <name>Zn(2+)</name>
        <dbReference type="ChEBI" id="CHEBI:29105"/>
    </ligand>
</feature>
<feature type="binding site" evidence="2">
    <location>
        <position position="34"/>
    </location>
    <ligand>
        <name>Zn(2+)</name>
        <dbReference type="ChEBI" id="CHEBI:29105"/>
    </ligand>
</feature>
<feature type="binding site" evidence="2">
    <location>
        <position position="37"/>
    </location>
    <ligand>
        <name>Zn(2+)</name>
        <dbReference type="ChEBI" id="CHEBI:29105"/>
    </ligand>
</feature>
<feature type="binding site" evidence="1">
    <location>
        <begin position="116"/>
        <end position="123"/>
    </location>
    <ligand>
        <name>ATP</name>
        <dbReference type="ChEBI" id="CHEBI:30616"/>
    </ligand>
</feature>